<comment type="function">
    <text evidence="1">One of the primary rRNA binding proteins, it binds directly to 18S rRNA where it nucleates assembly of the head domain of the small subunit.</text>
</comment>
<comment type="subunit">
    <text>Part of the small ribosomal subunit.</text>
</comment>
<comment type="subcellular location">
    <subcellularLocation>
        <location>Mitochondrion</location>
    </subcellularLocation>
</comment>
<comment type="similarity">
    <text evidence="2">Belongs to the universal ribosomal protein uS7 family.</text>
</comment>
<gene>
    <name type="primary">RPS7</name>
</gene>
<sequence length="230" mass="26566">MNLFGKSNFNCVFSSSLDWFHSSRLSEKVGTKKNRICRETESFYALCLSHRRYLCYALEGLLPSRPRGRRASTYNCSDNLGYIRGLNGKQKQLIKKLVHICMIDGKKTRSRAIVYKTFHRLAPHGDVIKLLVNAIENVKPICEVKKVRISGTTRLVPSIIATNRQETLAIRWMLESAAKRRMGKKSISLDQCLYAEILEASQKMGIARKKRDDLHKLAEANRSFSHYRWW</sequence>
<proteinExistence type="inferred from homology"/>
<organism>
    <name type="scientific">Marchantia polymorpha</name>
    <name type="common">Common liverwort</name>
    <name type="synonym">Marchantia aquatica</name>
    <dbReference type="NCBI Taxonomy" id="3197"/>
    <lineage>
        <taxon>Eukaryota</taxon>
        <taxon>Viridiplantae</taxon>
        <taxon>Streptophyta</taxon>
        <taxon>Embryophyta</taxon>
        <taxon>Marchantiophyta</taxon>
        <taxon>Marchantiopsida</taxon>
        <taxon>Marchantiidae</taxon>
        <taxon>Marchantiales</taxon>
        <taxon>Marchantiaceae</taxon>
        <taxon>Marchantia</taxon>
    </lineage>
</organism>
<feature type="chain" id="PRO_0000124520" description="Small ribosomal subunit protein uS7m">
    <location>
        <begin position="1"/>
        <end position="230"/>
    </location>
</feature>
<protein>
    <recommendedName>
        <fullName evidence="2">Small ribosomal subunit protein uS7m</fullName>
    </recommendedName>
    <alternativeName>
        <fullName>Ribosomal protein S7, mitochondrial</fullName>
    </alternativeName>
</protein>
<name>RT07_MARPO</name>
<dbReference type="EMBL" id="M68929">
    <property type="protein sequence ID" value="AAC09403.1"/>
    <property type="molecule type" value="Genomic_DNA"/>
</dbReference>
<dbReference type="PIR" id="S25964">
    <property type="entry name" value="S25964"/>
</dbReference>
<dbReference type="RefSeq" id="NP_054406.1">
    <property type="nucleotide sequence ID" value="NC_001660.1"/>
</dbReference>
<dbReference type="SMR" id="P26867"/>
<dbReference type="GeneID" id="2702668"/>
<dbReference type="GO" id="GO:0005763">
    <property type="term" value="C:mitochondrial small ribosomal subunit"/>
    <property type="evidence" value="ECO:0007669"/>
    <property type="project" value="InterPro"/>
</dbReference>
<dbReference type="GO" id="GO:0019843">
    <property type="term" value="F:rRNA binding"/>
    <property type="evidence" value="ECO:0007669"/>
    <property type="project" value="UniProtKB-KW"/>
</dbReference>
<dbReference type="GO" id="GO:0003735">
    <property type="term" value="F:structural constituent of ribosome"/>
    <property type="evidence" value="ECO:0007669"/>
    <property type="project" value="InterPro"/>
</dbReference>
<dbReference type="GO" id="GO:0006412">
    <property type="term" value="P:translation"/>
    <property type="evidence" value="ECO:0007669"/>
    <property type="project" value="InterPro"/>
</dbReference>
<dbReference type="CDD" id="cd15484">
    <property type="entry name" value="uS7_plant"/>
    <property type="match status" value="1"/>
</dbReference>
<dbReference type="Gene3D" id="1.10.455.10">
    <property type="entry name" value="Ribosomal protein S7 domain"/>
    <property type="match status" value="1"/>
</dbReference>
<dbReference type="InterPro" id="IPR000235">
    <property type="entry name" value="Ribosomal_uS7"/>
</dbReference>
<dbReference type="InterPro" id="IPR005717">
    <property type="entry name" value="Ribosomal_uS7_bac/org-type"/>
</dbReference>
<dbReference type="InterPro" id="IPR023798">
    <property type="entry name" value="Ribosomal_uS7_dom"/>
</dbReference>
<dbReference type="InterPro" id="IPR036823">
    <property type="entry name" value="Ribosomal_uS7_dom_sf"/>
</dbReference>
<dbReference type="InterPro" id="IPR034643">
    <property type="entry name" value="RPS7_plant"/>
</dbReference>
<dbReference type="NCBIfam" id="TIGR01029">
    <property type="entry name" value="rpsG_bact"/>
    <property type="match status" value="1"/>
</dbReference>
<dbReference type="PANTHER" id="PTHR11205">
    <property type="entry name" value="RIBOSOMAL PROTEIN S7"/>
    <property type="match status" value="1"/>
</dbReference>
<dbReference type="Pfam" id="PF00177">
    <property type="entry name" value="Ribosomal_S7"/>
    <property type="match status" value="1"/>
</dbReference>
<dbReference type="PIRSF" id="PIRSF002122">
    <property type="entry name" value="RPS7p_RPS7a_RPS5e_RPS7o"/>
    <property type="match status" value="1"/>
</dbReference>
<dbReference type="SUPFAM" id="SSF47973">
    <property type="entry name" value="Ribosomal protein S7"/>
    <property type="match status" value="1"/>
</dbReference>
<dbReference type="PROSITE" id="PS00052">
    <property type="entry name" value="RIBOSOMAL_S7"/>
    <property type="match status" value="1"/>
</dbReference>
<keyword id="KW-0496">Mitochondrion</keyword>
<keyword id="KW-0687">Ribonucleoprotein</keyword>
<keyword id="KW-0689">Ribosomal protein</keyword>
<keyword id="KW-0694">RNA-binding</keyword>
<keyword id="KW-0699">rRNA-binding</keyword>
<evidence type="ECO:0000250" key="1"/>
<evidence type="ECO:0000305" key="2"/>
<accession>P26867</accession>
<reference key="1">
    <citation type="journal article" date="1992" name="J. Mol. Biol.">
        <title>Gene organization deduced from the complete sequence of liverwort Marchantia polymorpha mitochondrial DNA. A primitive form of plant mitochondrial genome.</title>
        <authorList>
            <person name="Oda K."/>
            <person name="Yamato K."/>
            <person name="Ohta E."/>
            <person name="Nakamura Y."/>
            <person name="Takemura M."/>
            <person name="Nozato N."/>
            <person name="Akashi K."/>
            <person name="Kanegae T."/>
            <person name="Ogura Y."/>
            <person name="Kohchi T."/>
            <person name="Ohyama K."/>
        </authorList>
    </citation>
    <scope>NUCLEOTIDE SEQUENCE [GENOMIC DNA]</scope>
</reference>
<reference key="2">
    <citation type="journal article" date="1992" name="Nucleic Acids Res.">
        <title>Gene clusters for ribosomal proteins in the mitochondrial genome of a liverwort, Marchantia polymorpha.</title>
        <authorList>
            <person name="Takemura M."/>
            <person name="Oda K."/>
            <person name="Yamato K."/>
            <person name="Ohta E."/>
            <person name="Nakamura Y."/>
            <person name="Nozato N."/>
            <person name="Akashi K."/>
            <person name="Ohyama K."/>
        </authorList>
    </citation>
    <scope>NUCLEOTIDE SEQUENCE [GENOMIC DNA]</scope>
</reference>
<geneLocation type="mitochondrion"/>